<sequence>MINTSRRSSRNKPATPAPELIKAEENPSDIHEDFADLPEPLLLSEARAENMPAVGSAISDLLKVERAAPLLIGNTVEEMVTGRLADRGLGELTEREKIILAIGIHCGESSMEHMNFLVTKRWITEELKTQLTSLAATTRALTEAGSLHRTYALLQSPDQAKKQEALDAMVTPQVGIDITTLNHEGLEDIWQSYSHDAKVDAVDDYLRNILNVDPTPLYAEDEWGRHIAFIPRWQLVAYGKNSDQFKTVYADEINYQRESLERILAKRVKLN</sequence>
<evidence type="ECO:0000250" key="1"/>
<evidence type="ECO:0000256" key="2">
    <source>
        <dbReference type="SAM" id="MobiDB-lite"/>
    </source>
</evidence>
<evidence type="ECO:0000305" key="3"/>
<protein>
    <recommendedName>
        <fullName>Phosphoprotein</fullName>
        <shortName>Protein P</shortName>
    </recommendedName>
    <alternativeName>
        <fullName>Protein M1</fullName>
    </alternativeName>
</protein>
<proteinExistence type="inferred from homology"/>
<accession>Q5GA89</accession>
<organismHost>
    <name type="scientific">Colocasia esculenta</name>
    <name type="common">Wild taro</name>
    <name type="synonym">Arum esculentum</name>
    <dbReference type="NCBI Taxonomy" id="4460"/>
</organismHost>
<name>PHOSP_TAVCV</name>
<reference key="1">
    <citation type="journal article" date="2005" name="J. Gen. Virol.">
        <title>Taro vein chlorosis virus: characterization and variability of a new nucleorhabdovirus.</title>
        <authorList>
            <person name="Revill P."/>
            <person name="Trinh X."/>
            <person name="Dale J."/>
            <person name="Harding R."/>
        </authorList>
    </citation>
    <scope>NUCLEOTIDE SEQUENCE [GENOMIC RNA]</scope>
</reference>
<gene>
    <name type="primary">P</name>
</gene>
<dbReference type="EMBL" id="AY674964">
    <property type="protein sequence ID" value="AAV92083.1"/>
    <property type="molecule type" value="Genomic_RNA"/>
</dbReference>
<dbReference type="KEGG" id="vg:5076500"/>
<dbReference type="OrthoDB" id="16611at10239"/>
<dbReference type="Proteomes" id="UP000007540">
    <property type="component" value="Segment"/>
</dbReference>
<dbReference type="GO" id="GO:0030430">
    <property type="term" value="C:host cell cytoplasm"/>
    <property type="evidence" value="ECO:0007669"/>
    <property type="project" value="UniProtKB-SubCell"/>
</dbReference>
<dbReference type="GO" id="GO:0044423">
    <property type="term" value="C:virion component"/>
    <property type="evidence" value="ECO:0007669"/>
    <property type="project" value="UniProtKB-KW"/>
</dbReference>
<keyword id="KW-0143">Chaperone</keyword>
<keyword id="KW-1035">Host cytoplasm</keyword>
<keyword id="KW-0597">Phosphoprotein</keyword>
<keyword id="KW-1185">Reference proteome</keyword>
<keyword id="KW-0693">Viral RNA replication</keyword>
<keyword id="KW-0946">Virion</keyword>
<feature type="chain" id="PRO_0000299240" description="Phosphoprotein">
    <location>
        <begin position="1"/>
        <end position="271"/>
    </location>
</feature>
<feature type="region of interest" description="Disordered" evidence="2">
    <location>
        <begin position="1"/>
        <end position="26"/>
    </location>
</feature>
<comment type="function">
    <text evidence="1">Non catalytic polymerase cofactor and regulatory protein that plays a role in viral transcription and replication. Stabilizes the RNA polymerase L to the N-RNA template and binds the soluble protein N, preventing it from encapsidating non-genomic RNA (By similarity).</text>
</comment>
<comment type="subunit">
    <text evidence="1">Homotrimer when phosphorylated. This trimer is stabilized by binding to the L protein. Binds soluble protein N, and ribonucleocapsid (By similarity).</text>
</comment>
<comment type="subcellular location">
    <subcellularLocation>
        <location>Virion</location>
    </subcellularLocation>
    <subcellularLocation>
        <location evidence="1">Host cytoplasm</location>
    </subcellularLocation>
</comment>
<comment type="PTM">
    <text evidence="1">Phosphorylated by host kinases.</text>
</comment>
<comment type="similarity">
    <text evidence="3">Belongs to the nucleorhabdovirus protein P family.</text>
</comment>
<organism>
    <name type="scientific">Taro vein chlorosis virus</name>
    <name type="common">TAVCV</name>
    <dbReference type="NCBI Taxonomy" id="2749935"/>
    <lineage>
        <taxon>Viruses</taxon>
        <taxon>Riboviria</taxon>
        <taxon>Orthornavirae</taxon>
        <taxon>Negarnaviricota</taxon>
        <taxon>Haploviricotina</taxon>
        <taxon>Monjiviricetes</taxon>
        <taxon>Mononegavirales</taxon>
        <taxon>Rhabdoviridae</taxon>
        <taxon>Betarhabdovirinae</taxon>
        <taxon>Alphanucleorhabdovirus</taxon>
    </lineage>
</organism>